<comment type="function">
    <text evidence="1">Peptidoglycan polymerase that catalyzes glycan chain elongation from lipid-linked precursors.</text>
</comment>
<comment type="catalytic activity">
    <reaction evidence="1">
        <text>[GlcNAc-(1-&gt;4)-Mur2Ac(oyl-L-Ala-gamma-D-Glu-L-Lys-D-Ala-D-Ala)](n)-di-trans,octa-cis-undecaprenyl diphosphate + beta-D-GlcNAc-(1-&gt;4)-Mur2Ac(oyl-L-Ala-gamma-D-Glu-L-Lys-D-Ala-D-Ala)-di-trans,octa-cis-undecaprenyl diphosphate = [GlcNAc-(1-&gt;4)-Mur2Ac(oyl-L-Ala-gamma-D-Glu-L-Lys-D-Ala-D-Ala)](n+1)-di-trans,octa-cis-undecaprenyl diphosphate + di-trans,octa-cis-undecaprenyl diphosphate + H(+)</text>
        <dbReference type="Rhea" id="RHEA:23708"/>
        <dbReference type="Rhea" id="RHEA-COMP:9602"/>
        <dbReference type="Rhea" id="RHEA-COMP:9603"/>
        <dbReference type="ChEBI" id="CHEBI:15378"/>
        <dbReference type="ChEBI" id="CHEBI:58405"/>
        <dbReference type="ChEBI" id="CHEBI:60033"/>
        <dbReference type="ChEBI" id="CHEBI:78435"/>
        <dbReference type="EC" id="2.4.99.28"/>
    </reaction>
</comment>
<comment type="pathway">
    <text evidence="1">Cell wall biogenesis; peptidoglycan biosynthesis.</text>
</comment>
<comment type="subcellular location">
    <subcellularLocation>
        <location evidence="1">Cell inner membrane</location>
        <topology evidence="1">Single-pass membrane protein</topology>
    </subcellularLocation>
</comment>
<comment type="similarity">
    <text evidence="1">Belongs to the glycosyltransferase 51 family.</text>
</comment>
<protein>
    <recommendedName>
        <fullName evidence="1">Biosynthetic peptidoglycan transglycosylase</fullName>
        <ecNumber evidence="1">2.4.99.28</ecNumber>
    </recommendedName>
    <alternativeName>
        <fullName evidence="1">Glycan polymerase</fullName>
    </alternativeName>
    <alternativeName>
        <fullName evidence="1">Peptidoglycan glycosyltransferase MtgA</fullName>
        <shortName evidence="1">PGT</shortName>
    </alternativeName>
</protein>
<keyword id="KW-0997">Cell inner membrane</keyword>
<keyword id="KW-1003">Cell membrane</keyword>
<keyword id="KW-0133">Cell shape</keyword>
<keyword id="KW-0961">Cell wall biogenesis/degradation</keyword>
<keyword id="KW-0328">Glycosyltransferase</keyword>
<keyword id="KW-0472">Membrane</keyword>
<keyword id="KW-0573">Peptidoglycan synthesis</keyword>
<keyword id="KW-0808">Transferase</keyword>
<keyword id="KW-0812">Transmembrane</keyword>
<keyword id="KW-1133">Transmembrane helix</keyword>
<reference key="1">
    <citation type="journal article" date="2009" name="J. Bacteriol.">
        <title>Genomic sequencing reveals regulatory mutations and recombinational events in the widely used MC4100 lineage of Escherichia coli K-12.</title>
        <authorList>
            <person name="Ferenci T."/>
            <person name="Zhou Z."/>
            <person name="Betteridge T."/>
            <person name="Ren Y."/>
            <person name="Liu Y."/>
            <person name="Feng L."/>
            <person name="Reeves P.R."/>
            <person name="Wang L."/>
        </authorList>
    </citation>
    <scope>NUCLEOTIDE SEQUENCE [LARGE SCALE GENOMIC DNA]</scope>
    <source>
        <strain>K12 / MC4100 / BW2952</strain>
    </source>
</reference>
<gene>
    <name evidence="1" type="primary">mtgA</name>
    <name type="ordered locus">BWG_2910</name>
</gene>
<name>MTGA_ECOBW</name>
<dbReference type="EC" id="2.4.99.28" evidence="1"/>
<dbReference type="EMBL" id="CP001396">
    <property type="protein sequence ID" value="ACR62089.1"/>
    <property type="molecule type" value="Genomic_DNA"/>
</dbReference>
<dbReference type="RefSeq" id="WP_000047091.1">
    <property type="nucleotide sequence ID" value="NC_012759.1"/>
</dbReference>
<dbReference type="SMR" id="C4ZSU7"/>
<dbReference type="CAZy" id="GT51">
    <property type="family name" value="Glycosyltransferase Family 51"/>
</dbReference>
<dbReference type="GeneID" id="75206064"/>
<dbReference type="KEGG" id="ebw:BWG_2910"/>
<dbReference type="HOGENOM" id="CLU_006354_1_1_6"/>
<dbReference type="UniPathway" id="UPA00219"/>
<dbReference type="GO" id="GO:0009274">
    <property type="term" value="C:peptidoglycan-based cell wall"/>
    <property type="evidence" value="ECO:0007669"/>
    <property type="project" value="InterPro"/>
</dbReference>
<dbReference type="GO" id="GO:0005886">
    <property type="term" value="C:plasma membrane"/>
    <property type="evidence" value="ECO:0007669"/>
    <property type="project" value="UniProtKB-SubCell"/>
</dbReference>
<dbReference type="GO" id="GO:0016763">
    <property type="term" value="F:pentosyltransferase activity"/>
    <property type="evidence" value="ECO:0007669"/>
    <property type="project" value="InterPro"/>
</dbReference>
<dbReference type="GO" id="GO:0008955">
    <property type="term" value="F:peptidoglycan glycosyltransferase activity"/>
    <property type="evidence" value="ECO:0007669"/>
    <property type="project" value="UniProtKB-UniRule"/>
</dbReference>
<dbReference type="GO" id="GO:0071555">
    <property type="term" value="P:cell wall organization"/>
    <property type="evidence" value="ECO:0007669"/>
    <property type="project" value="UniProtKB-KW"/>
</dbReference>
<dbReference type="GO" id="GO:0009252">
    <property type="term" value="P:peptidoglycan biosynthetic process"/>
    <property type="evidence" value="ECO:0007669"/>
    <property type="project" value="UniProtKB-UniRule"/>
</dbReference>
<dbReference type="GO" id="GO:0008360">
    <property type="term" value="P:regulation of cell shape"/>
    <property type="evidence" value="ECO:0007669"/>
    <property type="project" value="UniProtKB-KW"/>
</dbReference>
<dbReference type="FunFam" id="1.10.3810.10:FF:000004">
    <property type="entry name" value="Biosynthetic peptidoglycan transglycosylase"/>
    <property type="match status" value="1"/>
</dbReference>
<dbReference type="Gene3D" id="1.10.3810.10">
    <property type="entry name" value="Biosynthetic peptidoglycan transglycosylase-like"/>
    <property type="match status" value="1"/>
</dbReference>
<dbReference type="HAMAP" id="MF_00766">
    <property type="entry name" value="PGT_MtgA"/>
    <property type="match status" value="1"/>
</dbReference>
<dbReference type="InterPro" id="IPR001264">
    <property type="entry name" value="Glyco_trans_51"/>
</dbReference>
<dbReference type="InterPro" id="IPR023346">
    <property type="entry name" value="Lysozyme-like_dom_sf"/>
</dbReference>
<dbReference type="InterPro" id="IPR036950">
    <property type="entry name" value="PBP_transglycosylase"/>
</dbReference>
<dbReference type="InterPro" id="IPR011812">
    <property type="entry name" value="Pep_trsgly"/>
</dbReference>
<dbReference type="NCBIfam" id="TIGR02070">
    <property type="entry name" value="mono_pep_trsgly"/>
    <property type="match status" value="1"/>
</dbReference>
<dbReference type="PANTHER" id="PTHR30400:SF0">
    <property type="entry name" value="BIOSYNTHETIC PEPTIDOGLYCAN TRANSGLYCOSYLASE"/>
    <property type="match status" value="1"/>
</dbReference>
<dbReference type="PANTHER" id="PTHR30400">
    <property type="entry name" value="MONOFUNCTIONAL BIOSYNTHETIC PEPTIDOGLYCAN TRANSGLYCOSYLASE"/>
    <property type="match status" value="1"/>
</dbReference>
<dbReference type="Pfam" id="PF00912">
    <property type="entry name" value="Transgly"/>
    <property type="match status" value="1"/>
</dbReference>
<dbReference type="SUPFAM" id="SSF53955">
    <property type="entry name" value="Lysozyme-like"/>
    <property type="match status" value="1"/>
</dbReference>
<proteinExistence type="inferred from homology"/>
<evidence type="ECO:0000255" key="1">
    <source>
        <dbReference type="HAMAP-Rule" id="MF_00766"/>
    </source>
</evidence>
<feature type="chain" id="PRO_1000212891" description="Biosynthetic peptidoglycan transglycosylase">
    <location>
        <begin position="1"/>
        <end position="242"/>
    </location>
</feature>
<feature type="transmembrane region" description="Helical" evidence="1">
    <location>
        <begin position="19"/>
        <end position="39"/>
    </location>
</feature>
<accession>C4ZSU7</accession>
<organism>
    <name type="scientific">Escherichia coli (strain K12 / MC4100 / BW2952)</name>
    <dbReference type="NCBI Taxonomy" id="595496"/>
    <lineage>
        <taxon>Bacteria</taxon>
        <taxon>Pseudomonadati</taxon>
        <taxon>Pseudomonadota</taxon>
        <taxon>Gammaproteobacteria</taxon>
        <taxon>Enterobacterales</taxon>
        <taxon>Enterobacteriaceae</taxon>
        <taxon>Escherichia</taxon>
    </lineage>
</organism>
<sequence length="242" mass="27342">MSKSRLTVFSFVRRFLLRLMVVLAVFWGGGIALFSVAPVPFSAVMVERQVSAWLHGNFRYVAHSDWVSMDQISPWMGLAVIAAEDQKFPEHWGFDVASIEKALAHNERNENRIRGASTISQQTAKNLFLWDGRSWVRKGLEAGLTLGIETVWSKKRILTVYLNIAEFGDGVFGVEAAAQRYFHKPASKLTRSEAALLAAVLPNPLRFKVSSPSGYVRSRQAWILRQMYQLGGEPFMQQHQLD</sequence>